<reference key="1">
    <citation type="journal article" date="2006" name="J. Bacteriol.">
        <title>Pathogenomic sequence analysis of Bacillus cereus and Bacillus thuringiensis isolates closely related to Bacillus anthracis.</title>
        <authorList>
            <person name="Han C.S."/>
            <person name="Xie G."/>
            <person name="Challacombe J.F."/>
            <person name="Altherr M.R."/>
            <person name="Bhotika S.S."/>
            <person name="Bruce D."/>
            <person name="Campbell C.S."/>
            <person name="Campbell M.L."/>
            <person name="Chen J."/>
            <person name="Chertkov O."/>
            <person name="Cleland C."/>
            <person name="Dimitrijevic M."/>
            <person name="Doggett N.A."/>
            <person name="Fawcett J.J."/>
            <person name="Glavina T."/>
            <person name="Goodwin L.A."/>
            <person name="Hill K.K."/>
            <person name="Hitchcock P."/>
            <person name="Jackson P.J."/>
            <person name="Keim P."/>
            <person name="Kewalramani A.R."/>
            <person name="Longmire J."/>
            <person name="Lucas S."/>
            <person name="Malfatti S."/>
            <person name="McMurry K."/>
            <person name="Meincke L.J."/>
            <person name="Misra M."/>
            <person name="Moseman B.L."/>
            <person name="Mundt M."/>
            <person name="Munk A.C."/>
            <person name="Okinaka R.T."/>
            <person name="Parson-Quintana B."/>
            <person name="Reilly L.P."/>
            <person name="Richardson P."/>
            <person name="Robinson D.L."/>
            <person name="Rubin E."/>
            <person name="Saunders E."/>
            <person name="Tapia R."/>
            <person name="Tesmer J.G."/>
            <person name="Thayer N."/>
            <person name="Thompson L.S."/>
            <person name="Tice H."/>
            <person name="Ticknor L.O."/>
            <person name="Wills P.L."/>
            <person name="Brettin T.S."/>
            <person name="Gilna P."/>
        </authorList>
    </citation>
    <scope>NUCLEOTIDE SEQUENCE [LARGE SCALE GENOMIC DNA]</scope>
    <source>
        <strain>ZK / E33L</strain>
    </source>
</reference>
<organism>
    <name type="scientific">Bacillus cereus (strain ZK / E33L)</name>
    <dbReference type="NCBI Taxonomy" id="288681"/>
    <lineage>
        <taxon>Bacteria</taxon>
        <taxon>Bacillati</taxon>
        <taxon>Bacillota</taxon>
        <taxon>Bacilli</taxon>
        <taxon>Bacillales</taxon>
        <taxon>Bacillaceae</taxon>
        <taxon>Bacillus</taxon>
        <taxon>Bacillus cereus group</taxon>
    </lineage>
</organism>
<accession>Q63FR5</accession>
<keyword id="KW-0963">Cytoplasm</keyword>
<keyword id="KW-0704">Schiff base</keyword>
<keyword id="KW-0784">Thiamine biosynthesis</keyword>
<keyword id="KW-0808">Transferase</keyword>
<sequence>MIMLNIGPFSFHSRLLLGTGKFPDFDVQQKAIDVSEAEVLTFAVRRMDIFDAKQPNLLEKLDVKKYKLLPNTAGAKNAEEAVRIAKLAKASGLCDMIKVEVIGDDRTLLPDPVETLKASEMLLEEGFIVLPYTSDDVVLARKLQELGVHAIMPGASPIGSGLGIVNPLNLSFIIEQATVPVIVDAGIGSPADAAFAMELGADGVLLNTAVSGAKDPIKMAQAMKLSIEAGRLGFEAGRIARKRCATASSPLEGMSVVE</sequence>
<proteinExistence type="inferred from homology"/>
<protein>
    <recommendedName>
        <fullName evidence="1">Thiazole synthase</fullName>
        <ecNumber evidence="1">2.8.1.10</ecNumber>
    </recommendedName>
</protein>
<dbReference type="EC" id="2.8.1.10" evidence="1"/>
<dbReference type="EMBL" id="CP000001">
    <property type="protein sequence ID" value="AAU19601.1"/>
    <property type="molecule type" value="Genomic_DNA"/>
</dbReference>
<dbReference type="SMR" id="Q63FR5"/>
<dbReference type="KEGG" id="bcz:BCE33L0642"/>
<dbReference type="UniPathway" id="UPA00060"/>
<dbReference type="Proteomes" id="UP000002612">
    <property type="component" value="Chromosome"/>
</dbReference>
<dbReference type="GO" id="GO:0005737">
    <property type="term" value="C:cytoplasm"/>
    <property type="evidence" value="ECO:0007669"/>
    <property type="project" value="UniProtKB-SubCell"/>
</dbReference>
<dbReference type="GO" id="GO:1990107">
    <property type="term" value="F:thiazole synthase activity"/>
    <property type="evidence" value="ECO:0007669"/>
    <property type="project" value="UniProtKB-EC"/>
</dbReference>
<dbReference type="GO" id="GO:0009229">
    <property type="term" value="P:thiamine diphosphate biosynthetic process"/>
    <property type="evidence" value="ECO:0007669"/>
    <property type="project" value="UniProtKB-UniRule"/>
</dbReference>
<dbReference type="CDD" id="cd04728">
    <property type="entry name" value="ThiG"/>
    <property type="match status" value="1"/>
</dbReference>
<dbReference type="FunFam" id="3.20.20.70:FF:000049">
    <property type="entry name" value="Thiazole synthase"/>
    <property type="match status" value="1"/>
</dbReference>
<dbReference type="Gene3D" id="3.20.20.70">
    <property type="entry name" value="Aldolase class I"/>
    <property type="match status" value="1"/>
</dbReference>
<dbReference type="HAMAP" id="MF_00443">
    <property type="entry name" value="ThiG"/>
    <property type="match status" value="1"/>
</dbReference>
<dbReference type="InterPro" id="IPR013785">
    <property type="entry name" value="Aldolase_TIM"/>
</dbReference>
<dbReference type="InterPro" id="IPR033983">
    <property type="entry name" value="Thiazole_synthase_ThiG"/>
</dbReference>
<dbReference type="InterPro" id="IPR008867">
    <property type="entry name" value="ThiG"/>
</dbReference>
<dbReference type="PANTHER" id="PTHR34266">
    <property type="entry name" value="THIAZOLE SYNTHASE"/>
    <property type="match status" value="1"/>
</dbReference>
<dbReference type="PANTHER" id="PTHR34266:SF2">
    <property type="entry name" value="THIAZOLE SYNTHASE"/>
    <property type="match status" value="1"/>
</dbReference>
<dbReference type="Pfam" id="PF05690">
    <property type="entry name" value="ThiG"/>
    <property type="match status" value="1"/>
</dbReference>
<dbReference type="SUPFAM" id="SSF110399">
    <property type="entry name" value="ThiG-like"/>
    <property type="match status" value="1"/>
</dbReference>
<feature type="chain" id="PRO_0000162782" description="Thiazole synthase">
    <location>
        <begin position="1"/>
        <end position="258"/>
    </location>
</feature>
<feature type="active site" description="Schiff-base intermediate with DXP" evidence="1">
    <location>
        <position position="98"/>
    </location>
</feature>
<feature type="binding site" evidence="1">
    <location>
        <position position="159"/>
    </location>
    <ligand>
        <name>1-deoxy-D-xylulose 5-phosphate</name>
        <dbReference type="ChEBI" id="CHEBI:57792"/>
    </ligand>
</feature>
<feature type="binding site" evidence="1">
    <location>
        <begin position="185"/>
        <end position="186"/>
    </location>
    <ligand>
        <name>1-deoxy-D-xylulose 5-phosphate</name>
        <dbReference type="ChEBI" id="CHEBI:57792"/>
    </ligand>
</feature>
<feature type="binding site" evidence="1">
    <location>
        <begin position="207"/>
        <end position="208"/>
    </location>
    <ligand>
        <name>1-deoxy-D-xylulose 5-phosphate</name>
        <dbReference type="ChEBI" id="CHEBI:57792"/>
    </ligand>
</feature>
<evidence type="ECO:0000255" key="1">
    <source>
        <dbReference type="HAMAP-Rule" id="MF_00443"/>
    </source>
</evidence>
<comment type="function">
    <text evidence="1">Catalyzes the rearrangement of 1-deoxy-D-xylulose 5-phosphate (DXP) to produce the thiazole phosphate moiety of thiamine. Sulfur is provided by the thiocarboxylate moiety of the carrier protein ThiS. In vitro, sulfur can be provided by H(2)S.</text>
</comment>
<comment type="catalytic activity">
    <reaction evidence="1">
        <text>[ThiS sulfur-carrier protein]-C-terminal-Gly-aminoethanethioate + 2-iminoacetate + 1-deoxy-D-xylulose 5-phosphate = [ThiS sulfur-carrier protein]-C-terminal Gly-Gly + 2-[(2R,5Z)-2-carboxy-4-methylthiazol-5(2H)-ylidene]ethyl phosphate + 2 H2O + H(+)</text>
        <dbReference type="Rhea" id="RHEA:26297"/>
        <dbReference type="Rhea" id="RHEA-COMP:12909"/>
        <dbReference type="Rhea" id="RHEA-COMP:19908"/>
        <dbReference type="ChEBI" id="CHEBI:15377"/>
        <dbReference type="ChEBI" id="CHEBI:15378"/>
        <dbReference type="ChEBI" id="CHEBI:57792"/>
        <dbReference type="ChEBI" id="CHEBI:62899"/>
        <dbReference type="ChEBI" id="CHEBI:77846"/>
        <dbReference type="ChEBI" id="CHEBI:90778"/>
        <dbReference type="ChEBI" id="CHEBI:232372"/>
        <dbReference type="EC" id="2.8.1.10"/>
    </reaction>
</comment>
<comment type="pathway">
    <text evidence="1">Cofactor biosynthesis; thiamine diphosphate biosynthesis.</text>
</comment>
<comment type="subunit">
    <text evidence="1">Homotetramer. Forms heterodimers with either ThiH or ThiS.</text>
</comment>
<comment type="subcellular location">
    <subcellularLocation>
        <location evidence="1">Cytoplasm</location>
    </subcellularLocation>
</comment>
<comment type="similarity">
    <text evidence="1">Belongs to the ThiG family.</text>
</comment>
<gene>
    <name evidence="1" type="primary">thiG</name>
    <name type="ordered locus">BCE33L0642</name>
</gene>
<name>THIG_BACCZ</name>